<name>FABZ_SALHS</name>
<organism>
    <name type="scientific">Salmonella heidelberg (strain SL476)</name>
    <dbReference type="NCBI Taxonomy" id="454169"/>
    <lineage>
        <taxon>Bacteria</taxon>
        <taxon>Pseudomonadati</taxon>
        <taxon>Pseudomonadota</taxon>
        <taxon>Gammaproteobacteria</taxon>
        <taxon>Enterobacterales</taxon>
        <taxon>Enterobacteriaceae</taxon>
        <taxon>Salmonella</taxon>
    </lineage>
</organism>
<comment type="function">
    <text evidence="1">Involved in unsaturated fatty acids biosynthesis. Catalyzes the dehydration of short chain beta-hydroxyacyl-ACPs and long chain saturated and unsaturated beta-hydroxyacyl-ACPs.</text>
</comment>
<comment type="catalytic activity">
    <reaction evidence="1">
        <text>a (3R)-hydroxyacyl-[ACP] = a (2E)-enoyl-[ACP] + H2O</text>
        <dbReference type="Rhea" id="RHEA:13097"/>
        <dbReference type="Rhea" id="RHEA-COMP:9925"/>
        <dbReference type="Rhea" id="RHEA-COMP:9945"/>
        <dbReference type="ChEBI" id="CHEBI:15377"/>
        <dbReference type="ChEBI" id="CHEBI:78784"/>
        <dbReference type="ChEBI" id="CHEBI:78827"/>
        <dbReference type="EC" id="4.2.1.59"/>
    </reaction>
</comment>
<comment type="subcellular location">
    <subcellularLocation>
        <location evidence="1">Cytoplasm</location>
    </subcellularLocation>
</comment>
<comment type="similarity">
    <text evidence="1">Belongs to the thioester dehydratase family. FabZ subfamily.</text>
</comment>
<accession>B4TK55</accession>
<proteinExistence type="inferred from homology"/>
<reference key="1">
    <citation type="journal article" date="2011" name="J. Bacteriol.">
        <title>Comparative genomics of 28 Salmonella enterica isolates: evidence for CRISPR-mediated adaptive sublineage evolution.</title>
        <authorList>
            <person name="Fricke W.F."/>
            <person name="Mammel M.K."/>
            <person name="McDermott P.F."/>
            <person name="Tartera C."/>
            <person name="White D.G."/>
            <person name="Leclerc J.E."/>
            <person name="Ravel J."/>
            <person name="Cebula T.A."/>
        </authorList>
    </citation>
    <scope>NUCLEOTIDE SEQUENCE [LARGE SCALE GENOMIC DNA]</scope>
    <source>
        <strain>SL476</strain>
    </source>
</reference>
<dbReference type="EC" id="4.2.1.59" evidence="1"/>
<dbReference type="EMBL" id="CP001120">
    <property type="protein sequence ID" value="ACF69741.1"/>
    <property type="molecule type" value="Genomic_DNA"/>
</dbReference>
<dbReference type="RefSeq" id="WP_000210741.1">
    <property type="nucleotide sequence ID" value="NC_011083.1"/>
</dbReference>
<dbReference type="SMR" id="B4TK55"/>
<dbReference type="GeneID" id="66754751"/>
<dbReference type="KEGG" id="seh:SeHA_C0265"/>
<dbReference type="HOGENOM" id="CLU_078912_1_0_6"/>
<dbReference type="Proteomes" id="UP000001866">
    <property type="component" value="Chromosome"/>
</dbReference>
<dbReference type="GO" id="GO:0005737">
    <property type="term" value="C:cytoplasm"/>
    <property type="evidence" value="ECO:0007669"/>
    <property type="project" value="UniProtKB-SubCell"/>
</dbReference>
<dbReference type="GO" id="GO:0016020">
    <property type="term" value="C:membrane"/>
    <property type="evidence" value="ECO:0007669"/>
    <property type="project" value="GOC"/>
</dbReference>
<dbReference type="GO" id="GO:0019171">
    <property type="term" value="F:(3R)-hydroxyacyl-[acyl-carrier-protein] dehydratase activity"/>
    <property type="evidence" value="ECO:0007669"/>
    <property type="project" value="UniProtKB-EC"/>
</dbReference>
<dbReference type="GO" id="GO:0006633">
    <property type="term" value="P:fatty acid biosynthetic process"/>
    <property type="evidence" value="ECO:0007669"/>
    <property type="project" value="UniProtKB-UniRule"/>
</dbReference>
<dbReference type="GO" id="GO:0009245">
    <property type="term" value="P:lipid A biosynthetic process"/>
    <property type="evidence" value="ECO:0007669"/>
    <property type="project" value="UniProtKB-UniRule"/>
</dbReference>
<dbReference type="CDD" id="cd01288">
    <property type="entry name" value="FabZ"/>
    <property type="match status" value="1"/>
</dbReference>
<dbReference type="FunFam" id="3.10.129.10:FF:000001">
    <property type="entry name" value="3-hydroxyacyl-[acyl-carrier-protein] dehydratase FabZ"/>
    <property type="match status" value="1"/>
</dbReference>
<dbReference type="Gene3D" id="3.10.129.10">
    <property type="entry name" value="Hotdog Thioesterase"/>
    <property type="match status" value="1"/>
</dbReference>
<dbReference type="HAMAP" id="MF_00406">
    <property type="entry name" value="FabZ"/>
    <property type="match status" value="1"/>
</dbReference>
<dbReference type="InterPro" id="IPR013114">
    <property type="entry name" value="FabA_FabZ"/>
</dbReference>
<dbReference type="InterPro" id="IPR010084">
    <property type="entry name" value="FabZ"/>
</dbReference>
<dbReference type="InterPro" id="IPR029069">
    <property type="entry name" value="HotDog_dom_sf"/>
</dbReference>
<dbReference type="NCBIfam" id="TIGR01750">
    <property type="entry name" value="fabZ"/>
    <property type="match status" value="1"/>
</dbReference>
<dbReference type="NCBIfam" id="NF000582">
    <property type="entry name" value="PRK00006.1"/>
    <property type="match status" value="1"/>
</dbReference>
<dbReference type="PANTHER" id="PTHR30272">
    <property type="entry name" value="3-HYDROXYACYL-[ACYL-CARRIER-PROTEIN] DEHYDRATASE"/>
    <property type="match status" value="1"/>
</dbReference>
<dbReference type="PANTHER" id="PTHR30272:SF1">
    <property type="entry name" value="3-HYDROXYACYL-[ACYL-CARRIER-PROTEIN] DEHYDRATASE"/>
    <property type="match status" value="1"/>
</dbReference>
<dbReference type="Pfam" id="PF07977">
    <property type="entry name" value="FabA"/>
    <property type="match status" value="1"/>
</dbReference>
<dbReference type="SUPFAM" id="SSF54637">
    <property type="entry name" value="Thioesterase/thiol ester dehydrase-isomerase"/>
    <property type="match status" value="1"/>
</dbReference>
<feature type="chain" id="PRO_1000123662" description="3-hydroxyacyl-[acyl-carrier-protein] dehydratase FabZ">
    <location>
        <begin position="1"/>
        <end position="151"/>
    </location>
</feature>
<feature type="active site" evidence="1">
    <location>
        <position position="54"/>
    </location>
</feature>
<protein>
    <recommendedName>
        <fullName evidence="1">3-hydroxyacyl-[acyl-carrier-protein] dehydratase FabZ</fullName>
        <ecNumber evidence="1">4.2.1.59</ecNumber>
    </recommendedName>
    <alternativeName>
        <fullName evidence="1">(3R)-hydroxymyristoyl-[acyl-carrier-protein] dehydratase</fullName>
        <shortName evidence="1">(3R)-hydroxymyristoyl-ACP dehydrase</shortName>
    </alternativeName>
    <alternativeName>
        <fullName evidence="1">Beta-hydroxyacyl-ACP dehydratase</fullName>
    </alternativeName>
</protein>
<keyword id="KW-0963">Cytoplasm</keyword>
<keyword id="KW-0441">Lipid A biosynthesis</keyword>
<keyword id="KW-0444">Lipid biosynthesis</keyword>
<keyword id="KW-0443">Lipid metabolism</keyword>
<keyword id="KW-0456">Lyase</keyword>
<evidence type="ECO:0000255" key="1">
    <source>
        <dbReference type="HAMAP-Rule" id="MF_00406"/>
    </source>
</evidence>
<gene>
    <name evidence="1" type="primary">fabZ</name>
    <name type="ordered locus">SeHA_C0265</name>
</gene>
<sequence>MTTNTHTLQIEEILELLPHRFPFLLVDRVLDFEEGRFLRAVKNVSVNEPFFQGHFPGKPILPGVLILEAMAQATGILAFKSVGKLEPGELYYFAGIDEARFKRPVVPGDQMIMEVTFEKTRRGLTRFKGVALVDGKVVCEATMMCARSREA</sequence>